<accession>B3VA58</accession>
<protein>
    <recommendedName>
        <fullName evidence="5">UDP-N-acetylglucosamine--dolichyl-phosphate N-acetylglucosaminyltransferase</fullName>
        <ecNumber evidence="3">2.4.1.153</ecNumber>
    </recommendedName>
    <alternativeName>
        <fullName evidence="5">Dol-P-GlcNAc synthase</fullName>
    </alternativeName>
</protein>
<proteinExistence type="evidence at protein level"/>
<keyword id="KW-1003">Cell membrane</keyword>
<keyword id="KW-0328">Glycosyltransferase</keyword>
<keyword id="KW-0472">Membrane</keyword>
<keyword id="KW-0808">Transferase</keyword>
<keyword id="KW-0812">Transmembrane</keyword>
<keyword id="KW-1133">Transmembrane helix</keyword>
<gene>
    <name evidence="4" type="primary">aglK</name>
</gene>
<sequence>MADKLIYLIIPAYNEEKMIKNVVNNLQNHNYDNIIIVDDGSKDNTYKIMKELEEESKQNNNNNNNNNNNKVIAIKHEQNKGVGGATITGLKKAYELGADIAVTFDADGQHAPDDIAKVIQPIINDSKEYVVGSRIKNPKEFKNMPLTKKVGNLGLSFITFLLGGYYVTDSQSGLRAFSKSALKVLSEQLRAKRYETCSEALIIAKKNKLNIGEVPIKTIYTEYSMARGTNVMIGFKIFYRLLMLKMGKVLD</sequence>
<reference key="1">
    <citation type="journal article" date="2009" name="J. Bacteriol.">
        <title>AglC and AglK are involved in biosynthesis and attachment of diacetylated glucuronic acid to the N-glycan in Methanococcus voltae.</title>
        <authorList>
            <person name="Chaban B."/>
            <person name="Logan S.M."/>
            <person name="Kelly J.F."/>
            <person name="Jarrell K.F."/>
        </authorList>
    </citation>
    <scope>NUCLEOTIDE SEQUENCE [GENOMIC DNA]</scope>
    <scope>FUNCTION</scope>
    <scope>DISRUPTION PHENOTYPE</scope>
    <source>
        <strain>ATCC 33273 / DSM 1537 / NBRC 100457 / OCM 70 / PS</strain>
    </source>
</reference>
<reference key="2">
    <citation type="journal article" date="2013" name="Nat. Chem. Biol.">
        <title>Biochemical evidence for an alternate pathway in N-linked glycoprotein biosynthesis.</title>
        <authorList>
            <person name="Larkin A."/>
            <person name="Chang M.M."/>
            <person name="Whitworth G.E."/>
            <person name="Imperiali B."/>
        </authorList>
    </citation>
    <scope>FUNCTION</scope>
    <scope>CATALYTIC ACTIVITY</scope>
    <scope>SUBSTRATE SPECIFICITY</scope>
    <source>
        <strain>ATCC 33273 / DSM 1537 / NBRC 100457 / OCM 70 / PS</strain>
    </source>
</reference>
<organism>
    <name type="scientific">Methanococcus voltae</name>
    <dbReference type="NCBI Taxonomy" id="2188"/>
    <lineage>
        <taxon>Archaea</taxon>
        <taxon>Methanobacteriati</taxon>
        <taxon>Methanobacteriota</taxon>
        <taxon>Methanomada group</taxon>
        <taxon>Methanococci</taxon>
        <taxon>Methanococcales</taxon>
        <taxon>Methanococcaceae</taxon>
        <taxon>Methanococcus</taxon>
    </lineage>
</organism>
<comment type="function">
    <text evidence="2 3">Involved in the assembly of an N-linked disaccharide that decorates the S-layer glycoprotein and flagellins (PubMed:18978056). AglK initiates N-linked glycosylation through the formation of alpha-linked dolichyl monophosphate N-acetylglucosamine. It catalyzes the transfer of GlcNAc from the donor substrate UDP-GlcNAc to dolichyl phosphate C55 (Dol-P) to yield Dol-P-GlcNAc (PubMed:23624439). AglK reaction proceeds with retention of stereochemistry (PubMed:23624439). The reaction is specific for UDP-GlcNAc. AglK shows a stronger preference for short dolichol (C55-60 Dol-P) substrates compared with the longer (C85-105 Dol-P) (PubMed:23624439).</text>
</comment>
<comment type="catalytic activity">
    <reaction evidence="3">
        <text>a di-trans,poly-cis-dolichyl phosphate + UDP-N-acetyl-alpha-D-glucosamine = an N-acetyl-alpha-D-glucosaminyl-phospho-di-trans,poly-cis-dolichol + UDP</text>
        <dbReference type="Rhea" id="RHEA:14693"/>
        <dbReference type="Rhea" id="RHEA-COMP:19498"/>
        <dbReference type="Rhea" id="RHEA-COMP:19508"/>
        <dbReference type="ChEBI" id="CHEBI:57683"/>
        <dbReference type="ChEBI" id="CHEBI:57705"/>
        <dbReference type="ChEBI" id="CHEBI:58050"/>
        <dbReference type="ChEBI" id="CHEBI:58223"/>
        <dbReference type="EC" id="2.4.1.153"/>
    </reaction>
</comment>
<comment type="pathway">
    <text evidence="7">Cell surface structure biogenesis; S-layer biogenesis.</text>
</comment>
<comment type="pathway">
    <text evidence="7">Protein modification; protein glycosylation.</text>
</comment>
<comment type="subcellular location">
    <subcellularLocation>
        <location evidence="8">Cell membrane</location>
        <topology evidence="8">Single-pass membrane protein</topology>
    </subcellularLocation>
</comment>
<comment type="disruption phenotype">
    <text evidence="2">Cells lacking this gene result in flagellins and S-layer proteins with significantly reduced apparent molecular masses, loss of flagellar assembly and absence of glycan attachment.</text>
</comment>
<comment type="similarity">
    <text evidence="6">Belongs to the glycosyltransferase 2 family.</text>
</comment>
<feature type="chain" id="PRO_0000435655" description="UDP-N-acetylglucosamine--dolichyl-phosphate N-acetylglucosaminyltransferase">
    <location>
        <begin position="1"/>
        <end position="251"/>
    </location>
</feature>
<feature type="transmembrane region" description="Helical" evidence="1">
    <location>
        <begin position="150"/>
        <end position="167"/>
    </location>
</feature>
<dbReference type="EC" id="2.4.1.153" evidence="3"/>
<dbReference type="EMBL" id="EU726230">
    <property type="protein sequence ID" value="ACE74694.1"/>
    <property type="molecule type" value="Genomic_DNA"/>
</dbReference>
<dbReference type="SMR" id="B3VA58"/>
<dbReference type="CAZy" id="GT2">
    <property type="family name" value="Glycosyltransferase Family 2"/>
</dbReference>
<dbReference type="KEGG" id="ag:ACE74694"/>
<dbReference type="BioCyc" id="MetaCyc:MONOMER-19263"/>
<dbReference type="BRENDA" id="2.4.1.153">
    <property type="organism ID" value="3268"/>
</dbReference>
<dbReference type="UniPathway" id="UPA00378"/>
<dbReference type="UniPathway" id="UPA00977"/>
<dbReference type="GO" id="GO:0005886">
    <property type="term" value="C:plasma membrane"/>
    <property type="evidence" value="ECO:0007669"/>
    <property type="project" value="UniProtKB-SubCell"/>
</dbReference>
<dbReference type="GO" id="GO:0004166">
    <property type="term" value="F:dolichyl-phosphate alpha-N-acetylglucosaminyltransferase activity"/>
    <property type="evidence" value="ECO:0000314"/>
    <property type="project" value="UniProtKB"/>
</dbReference>
<dbReference type="GO" id="GO:0006491">
    <property type="term" value="P:N-glycan processing"/>
    <property type="evidence" value="ECO:0000314"/>
    <property type="project" value="UniProtKB"/>
</dbReference>
<dbReference type="GO" id="GO:0006487">
    <property type="term" value="P:protein N-linked glycosylation"/>
    <property type="evidence" value="ECO:0007669"/>
    <property type="project" value="TreeGrafter"/>
</dbReference>
<dbReference type="GO" id="GO:0045232">
    <property type="term" value="P:S-layer organization"/>
    <property type="evidence" value="ECO:0007669"/>
    <property type="project" value="UniProtKB-UniPathway"/>
</dbReference>
<dbReference type="CDD" id="cd04179">
    <property type="entry name" value="DPM_DPG-synthase_like"/>
    <property type="match status" value="1"/>
</dbReference>
<dbReference type="FunFam" id="3.90.550.10:FF:000129">
    <property type="entry name" value="Glycosyltransferase family 2 protein"/>
    <property type="match status" value="1"/>
</dbReference>
<dbReference type="Gene3D" id="3.90.550.10">
    <property type="entry name" value="Spore Coat Polysaccharide Biosynthesis Protein SpsA, Chain A"/>
    <property type="match status" value="1"/>
</dbReference>
<dbReference type="InterPro" id="IPR001173">
    <property type="entry name" value="Glyco_trans_2-like"/>
</dbReference>
<dbReference type="InterPro" id="IPR029044">
    <property type="entry name" value="Nucleotide-diphossugar_trans"/>
</dbReference>
<dbReference type="PANTHER" id="PTHR10859:SF91">
    <property type="entry name" value="DOLICHYL-PHOSPHATE BETA-GLUCOSYLTRANSFERASE"/>
    <property type="match status" value="1"/>
</dbReference>
<dbReference type="PANTHER" id="PTHR10859">
    <property type="entry name" value="GLYCOSYL TRANSFERASE"/>
    <property type="match status" value="1"/>
</dbReference>
<dbReference type="Pfam" id="PF00535">
    <property type="entry name" value="Glycos_transf_2"/>
    <property type="match status" value="1"/>
</dbReference>
<dbReference type="SUPFAM" id="SSF53448">
    <property type="entry name" value="Nucleotide-diphospho-sugar transferases"/>
    <property type="match status" value="1"/>
</dbReference>
<evidence type="ECO:0000255" key="1"/>
<evidence type="ECO:0000269" key="2">
    <source>
    </source>
</evidence>
<evidence type="ECO:0000269" key="3">
    <source>
    </source>
</evidence>
<evidence type="ECO:0000303" key="4">
    <source>
    </source>
</evidence>
<evidence type="ECO:0000303" key="5">
    <source>
    </source>
</evidence>
<evidence type="ECO:0000305" key="6"/>
<evidence type="ECO:0000305" key="7">
    <source>
    </source>
</evidence>
<evidence type="ECO:0000305" key="8">
    <source>
    </source>
</evidence>
<name>AGLK_METVO</name>